<organism>
    <name type="scientific">Francisella philomiragia subsp. philomiragia (strain ATCC 25017 / CCUG 19701 / FSC 153 / O#319-036)</name>
    <dbReference type="NCBI Taxonomy" id="484022"/>
    <lineage>
        <taxon>Bacteria</taxon>
        <taxon>Pseudomonadati</taxon>
        <taxon>Pseudomonadota</taxon>
        <taxon>Gammaproteobacteria</taxon>
        <taxon>Thiotrichales</taxon>
        <taxon>Francisellaceae</taxon>
        <taxon>Francisella</taxon>
    </lineage>
</organism>
<sequence>MNFLNFSMLVFAYLLGSINSAIIVCYIFRLPSPRSVGSGNPGTTNVLRIGGNVPAIITLAFDILKGLVPVVLAKVLTGNEFITACTALYAILGHIFPIFFGFKGGKGVATLIGTLFGFSWILGLIFVVTWLCVAVITRYSSLSALVATVIASFSVIFTSDLQVATPFLIIAIIILVKHKGNIQRLISGQESKIGDKAKAKNDSN</sequence>
<dbReference type="EC" id="2.3.1.275" evidence="1"/>
<dbReference type="EMBL" id="CP000937">
    <property type="protein sequence ID" value="ABZ87728.1"/>
    <property type="molecule type" value="Genomic_DNA"/>
</dbReference>
<dbReference type="SMR" id="B0TYY2"/>
<dbReference type="KEGG" id="fph:Fphi_1503"/>
<dbReference type="eggNOG" id="COG0344">
    <property type="taxonomic scope" value="Bacteria"/>
</dbReference>
<dbReference type="HOGENOM" id="CLU_081254_0_2_6"/>
<dbReference type="UniPathway" id="UPA00085"/>
<dbReference type="GO" id="GO:0005886">
    <property type="term" value="C:plasma membrane"/>
    <property type="evidence" value="ECO:0007669"/>
    <property type="project" value="UniProtKB-SubCell"/>
</dbReference>
<dbReference type="GO" id="GO:0043772">
    <property type="term" value="F:acyl-phosphate glycerol-3-phosphate acyltransferase activity"/>
    <property type="evidence" value="ECO:0007669"/>
    <property type="project" value="UniProtKB-UniRule"/>
</dbReference>
<dbReference type="GO" id="GO:0008654">
    <property type="term" value="P:phospholipid biosynthetic process"/>
    <property type="evidence" value="ECO:0007669"/>
    <property type="project" value="UniProtKB-UniRule"/>
</dbReference>
<dbReference type="HAMAP" id="MF_01043">
    <property type="entry name" value="PlsY"/>
    <property type="match status" value="1"/>
</dbReference>
<dbReference type="InterPro" id="IPR003811">
    <property type="entry name" value="G3P_acylTferase_PlsY"/>
</dbReference>
<dbReference type="NCBIfam" id="TIGR00023">
    <property type="entry name" value="glycerol-3-phosphate 1-O-acyltransferase PlsY"/>
    <property type="match status" value="1"/>
</dbReference>
<dbReference type="PANTHER" id="PTHR30309:SF0">
    <property type="entry name" value="GLYCEROL-3-PHOSPHATE ACYLTRANSFERASE-RELATED"/>
    <property type="match status" value="1"/>
</dbReference>
<dbReference type="PANTHER" id="PTHR30309">
    <property type="entry name" value="INNER MEMBRANE PROTEIN YGIH"/>
    <property type="match status" value="1"/>
</dbReference>
<dbReference type="Pfam" id="PF02660">
    <property type="entry name" value="G3P_acyltransf"/>
    <property type="match status" value="1"/>
</dbReference>
<dbReference type="SMART" id="SM01207">
    <property type="entry name" value="G3P_acyltransf"/>
    <property type="match status" value="1"/>
</dbReference>
<name>PLSY_FRAP2</name>
<accession>B0TYY2</accession>
<proteinExistence type="inferred from homology"/>
<reference key="1">
    <citation type="submission" date="2007-12" db="EMBL/GenBank/DDBJ databases">
        <title>Complete sequence of chromosome of Francisella philomiragia subsp. philomiragia ATCC 25017.</title>
        <authorList>
            <consortium name="US DOE Joint Genome Institute"/>
            <person name="Copeland A."/>
            <person name="Lucas S."/>
            <person name="Lapidus A."/>
            <person name="Barry K."/>
            <person name="Detter J.C."/>
            <person name="Glavina del Rio T."/>
            <person name="Hammon N."/>
            <person name="Israni S."/>
            <person name="Dalin E."/>
            <person name="Tice H."/>
            <person name="Pitluck S."/>
            <person name="Chain P."/>
            <person name="Malfatti S."/>
            <person name="Shin M."/>
            <person name="Vergez L."/>
            <person name="Schmutz J."/>
            <person name="Larimer F."/>
            <person name="Land M."/>
            <person name="Hauser L."/>
            <person name="Richardson P."/>
        </authorList>
    </citation>
    <scope>NUCLEOTIDE SEQUENCE [LARGE SCALE GENOMIC DNA]</scope>
    <source>
        <strain>ATCC 25017 / CCUG 19701 / FSC 153 / O#319-036</strain>
    </source>
</reference>
<comment type="function">
    <text evidence="1">Catalyzes the transfer of an acyl group from acyl-phosphate (acyl-PO(4)) to glycerol-3-phosphate (G3P) to form lysophosphatidic acid (LPA). This enzyme utilizes acyl-phosphate as fatty acyl donor, but not acyl-CoA or acyl-ACP.</text>
</comment>
<comment type="catalytic activity">
    <reaction evidence="1">
        <text>an acyl phosphate + sn-glycerol 3-phosphate = a 1-acyl-sn-glycero-3-phosphate + phosphate</text>
        <dbReference type="Rhea" id="RHEA:34075"/>
        <dbReference type="ChEBI" id="CHEBI:43474"/>
        <dbReference type="ChEBI" id="CHEBI:57597"/>
        <dbReference type="ChEBI" id="CHEBI:57970"/>
        <dbReference type="ChEBI" id="CHEBI:59918"/>
        <dbReference type="EC" id="2.3.1.275"/>
    </reaction>
</comment>
<comment type="pathway">
    <text evidence="1">Lipid metabolism; phospholipid metabolism.</text>
</comment>
<comment type="subunit">
    <text evidence="1">Probably interacts with PlsX.</text>
</comment>
<comment type="subcellular location">
    <subcellularLocation>
        <location evidence="1">Cell inner membrane</location>
        <topology evidence="1">Multi-pass membrane protein</topology>
    </subcellularLocation>
</comment>
<comment type="similarity">
    <text evidence="1">Belongs to the PlsY family.</text>
</comment>
<keyword id="KW-0997">Cell inner membrane</keyword>
<keyword id="KW-1003">Cell membrane</keyword>
<keyword id="KW-0444">Lipid biosynthesis</keyword>
<keyword id="KW-0443">Lipid metabolism</keyword>
<keyword id="KW-0472">Membrane</keyword>
<keyword id="KW-0594">Phospholipid biosynthesis</keyword>
<keyword id="KW-1208">Phospholipid metabolism</keyword>
<keyword id="KW-0808">Transferase</keyword>
<keyword id="KW-0812">Transmembrane</keyword>
<keyword id="KW-1133">Transmembrane helix</keyword>
<feature type="chain" id="PRO_1000084385" description="Glycerol-3-phosphate acyltransferase">
    <location>
        <begin position="1"/>
        <end position="204"/>
    </location>
</feature>
<feature type="transmembrane region" description="Helical" evidence="1">
    <location>
        <begin position="8"/>
        <end position="28"/>
    </location>
</feature>
<feature type="transmembrane region" description="Helical" evidence="1">
    <location>
        <begin position="53"/>
        <end position="73"/>
    </location>
</feature>
<feature type="transmembrane region" description="Helical" evidence="1">
    <location>
        <begin position="81"/>
        <end position="101"/>
    </location>
</feature>
<feature type="transmembrane region" description="Helical" evidence="1">
    <location>
        <begin position="116"/>
        <end position="136"/>
    </location>
</feature>
<feature type="transmembrane region" description="Helical" evidence="1">
    <location>
        <begin position="155"/>
        <end position="175"/>
    </location>
</feature>
<protein>
    <recommendedName>
        <fullName evidence="1">Glycerol-3-phosphate acyltransferase</fullName>
    </recommendedName>
    <alternativeName>
        <fullName evidence="1">Acyl-PO4 G3P acyltransferase</fullName>
    </alternativeName>
    <alternativeName>
        <fullName evidence="1">Acyl-phosphate--glycerol-3-phosphate acyltransferase</fullName>
    </alternativeName>
    <alternativeName>
        <fullName evidence="1">G3P acyltransferase</fullName>
        <shortName evidence="1">GPAT</shortName>
        <ecNumber evidence="1">2.3.1.275</ecNumber>
    </alternativeName>
    <alternativeName>
        <fullName evidence="1">Lysophosphatidic acid synthase</fullName>
        <shortName evidence="1">LPA synthase</shortName>
    </alternativeName>
</protein>
<gene>
    <name evidence="1" type="primary">plsY</name>
    <name type="ordered locus">Fphi_1503</name>
</gene>
<evidence type="ECO:0000255" key="1">
    <source>
        <dbReference type="HAMAP-Rule" id="MF_01043"/>
    </source>
</evidence>